<gene>
    <name type="primary">cry9Ea</name>
    <name type="synonym">cryIXE(a)</name>
</gene>
<dbReference type="EMBL" id="AB011496">
    <property type="protein sequence ID" value="BAA34908.1"/>
    <property type="molecule type" value="Genomic_DNA"/>
</dbReference>
<dbReference type="RefSeq" id="WP_021727542.1">
    <property type="nucleotide sequence ID" value="NZ_NFEV01000132.1"/>
</dbReference>
<dbReference type="SMR" id="Q9ZNL9"/>
<dbReference type="GO" id="GO:0005102">
    <property type="term" value="F:signaling receptor binding"/>
    <property type="evidence" value="ECO:0007669"/>
    <property type="project" value="InterPro"/>
</dbReference>
<dbReference type="GO" id="GO:0090729">
    <property type="term" value="F:toxin activity"/>
    <property type="evidence" value="ECO:0007669"/>
    <property type="project" value="UniProtKB-KW"/>
</dbReference>
<dbReference type="GO" id="GO:0030435">
    <property type="term" value="P:sporulation resulting in formation of a cellular spore"/>
    <property type="evidence" value="ECO:0007669"/>
    <property type="project" value="UniProtKB-KW"/>
</dbReference>
<dbReference type="GO" id="GO:0001907">
    <property type="term" value="P:symbiont-mediated killing of host cell"/>
    <property type="evidence" value="ECO:0007669"/>
    <property type="project" value="InterPro"/>
</dbReference>
<dbReference type="CDD" id="cd04085">
    <property type="entry name" value="delta_endotoxin_C"/>
    <property type="match status" value="1"/>
</dbReference>
<dbReference type="Gene3D" id="2.60.120.260">
    <property type="entry name" value="Galactose-binding domain-like"/>
    <property type="match status" value="2"/>
</dbReference>
<dbReference type="Gene3D" id="2.100.10.10">
    <property type="entry name" value="Pesticidal crystal protein, central domain"/>
    <property type="match status" value="1"/>
</dbReference>
<dbReference type="Gene3D" id="1.20.190.10">
    <property type="entry name" value="Pesticidal crystal protein, N-terminal domain"/>
    <property type="match status" value="1"/>
</dbReference>
<dbReference type="InterPro" id="IPR048645">
    <property type="entry name" value="Cry1Ac-like_dom-VII"/>
</dbReference>
<dbReference type="InterPro" id="IPR041587">
    <property type="entry name" value="Cry_V"/>
</dbReference>
<dbReference type="InterPro" id="IPR008979">
    <property type="entry name" value="Galactose-bd-like_sf"/>
</dbReference>
<dbReference type="InterPro" id="IPR038979">
    <property type="entry name" value="Pest_crys"/>
</dbReference>
<dbReference type="InterPro" id="IPR005638">
    <property type="entry name" value="Pest_crys_dom-III"/>
</dbReference>
<dbReference type="InterPro" id="IPR005639">
    <property type="entry name" value="Pest_crys_dom_I"/>
</dbReference>
<dbReference type="InterPro" id="IPR036716">
    <property type="entry name" value="Pest_crys_N_sf"/>
</dbReference>
<dbReference type="InterPro" id="IPR036399">
    <property type="entry name" value="Pest_cryst_cen_dom_sf"/>
</dbReference>
<dbReference type="InterPro" id="IPR001178">
    <property type="entry name" value="Pest_cryst_dom_II"/>
</dbReference>
<dbReference type="PANTHER" id="PTHR37003">
    <property type="entry name" value="ENDOTOXIN_N DOMAIN-CONTAINING PROTEIN-RELATED"/>
    <property type="match status" value="1"/>
</dbReference>
<dbReference type="PANTHER" id="PTHR37003:SF2">
    <property type="entry name" value="PESTICIDAL CRYSTAL PROTEIN N-TERMINAL DOMAIN-CONTAINING PROTEIN"/>
    <property type="match status" value="1"/>
</dbReference>
<dbReference type="Pfam" id="PF17997">
    <property type="entry name" value="Cry1Ac_D5"/>
    <property type="match status" value="1"/>
</dbReference>
<dbReference type="Pfam" id="PF21463">
    <property type="entry name" value="Cry1Ac_dom-VII"/>
    <property type="match status" value="1"/>
</dbReference>
<dbReference type="Pfam" id="PF03944">
    <property type="entry name" value="Endotoxin_C"/>
    <property type="match status" value="1"/>
</dbReference>
<dbReference type="Pfam" id="PF00555">
    <property type="entry name" value="Endotoxin_M"/>
    <property type="match status" value="1"/>
</dbReference>
<dbReference type="Pfam" id="PF03945">
    <property type="entry name" value="Endotoxin_N"/>
    <property type="match status" value="1"/>
</dbReference>
<dbReference type="SUPFAM" id="SSF51096">
    <property type="entry name" value="delta-Endotoxin (insectocide), middle domain"/>
    <property type="match status" value="1"/>
</dbReference>
<dbReference type="SUPFAM" id="SSF56849">
    <property type="entry name" value="delta-Endotoxin (insectocide), N-terminal domain"/>
    <property type="match status" value="1"/>
</dbReference>
<dbReference type="SUPFAM" id="SSF49785">
    <property type="entry name" value="Galactose-binding domain-like"/>
    <property type="match status" value="2"/>
</dbReference>
<name>CR9EA_BACTA</name>
<protein>
    <recommendedName>
        <fullName>Pesticidal crystal protein Cry9Ea</fullName>
    </recommendedName>
    <alternativeName>
        <fullName>130 kDa crystal protein</fullName>
    </alternativeName>
    <alternativeName>
        <fullName>Crystaline entomocidal protoxin</fullName>
    </alternativeName>
    <alternativeName>
        <fullName>Insecticidal delta-endotoxin CryIXE(a)</fullName>
    </alternativeName>
</protein>
<sequence>MNRNNPNEYEIIDAPYCGCPSDDDVRYPLASDPNAAFQNMNYKEYLQTYDGDYTGSLINPNLSINPRDVLQTGINIVGRILGFLGVPFAGQLVTFYTFLLNQLWPTNDNAVWEAFMAQIEELIDQKISAQVVRNALDDLTGLHDYYEEYLAALEEWLERPNGARANLVTQRFENLHTAFVTRMPSFGTGPGSQRDAVALLTVYAQAANLHLLLLKDAEIYGARWGLQQGQINLYFNAQQERTRIYTNHCVETYNRGLEDVRGTNTESWLNYHRFRREMTLMAMDLVALFPFYNVRQYPNGANPQLTREIYTDPIVYNPPANQGICRRWGNNPYNTFSELENAFIRPPHLFERLNRLTISRNRYTAPTTNSFLDYWSGHTLQSQHANNPTTYETSYGQITSNTRLFNTTNGARAIDSRARNFGNLYANLYGVSSLNIFPTGVMSEITNAANTCRQDLTTTEELPLENNNFNLLSHVTFLRFNTTQGGPLATLGFVPTYVWTREDVDFTNTITADRITQLPWVKASEIGGGTTVVKGPGFTGGDILRRTDGGAVGTIRANVNAPLTQQYRIRLRYASTTSFVVNLFVNNSAAGFTLPSTMAQNGSLTYESFNTLEVTHTIRFSQSDTTLRLNIFPSISGQEVYVDKLEIVPINPTREAEEDLEDAKKAVASLFTRTRDGLQVNVTDYQVDQAANLVSCLSDEQYGHDKKMLLEAVRAAKRLSRERNLLQDPDFNEINSTEENGWKASNGVTISEGGPFFKGRALQLASARENYPTYIYQKVDASTLKPYTRYKLDGFVQSSQDLEIDLIHHHKVHLVKNVPDNLVSDTYSDGSCSGINRCEEQHQVDVQLDAEDHPKDCCEAAQTHEFSSYIHTGDLNASVDQGIWVVLQVRTTDGYATLGNLELVEVGPLSGESLEREQRDNAKWNEEVGRKRAETDRIYQDAKQAINHLFVDYQDQQLSPEVGMADIIDAQNLIASISDVYSDAVLQIPGINYEMYTELSNRLQQASYLYTSRNVVQNGDFNSGLDSWNATTDTAVQQDGNMHFLVLSHWDAQVSQQFRVQPNCKYVLRVTAKKVGNGDGYVTIQDGAHHRETLTFNACDYDVNGTHVNDNSYITKELVFYPKTEHMWVEVSETEGTFYIDSIEFIETQE</sequence>
<reference key="1">
    <citation type="submission" date="1998-02" db="EMBL/GenBank/DDBJ databases">
        <title>Bacillus thuringiensis cry gene for insecticidal crystal protein.</title>
        <authorList>
            <person name="Midoh N."/>
            <person name="Oyama K."/>
        </authorList>
    </citation>
    <scope>NUCLEOTIDE SEQUENCE [GENOMIC DNA]</scope>
    <source>
        <strain>SSK-10</strain>
    </source>
</reference>
<comment type="function">
    <text>Promotes colloidosmotic lysis by binding to the midgut epithelial cells of insects.</text>
</comment>
<comment type="developmental stage">
    <text>The crystal protein is produced during sporulation and is accumulated both as an inclusion and as part of the spore coat.</text>
</comment>
<comment type="miscellaneous">
    <text>Toxic segment of the protein is located in the N-terminus.</text>
</comment>
<comment type="similarity">
    <text evidence="1">Belongs to the delta endotoxin family.</text>
</comment>
<organism>
    <name type="scientific">Bacillus thuringiensis subsp. aizawai</name>
    <dbReference type="NCBI Taxonomy" id="1433"/>
    <lineage>
        <taxon>Bacteria</taxon>
        <taxon>Bacillati</taxon>
        <taxon>Bacillota</taxon>
        <taxon>Bacilli</taxon>
        <taxon>Bacillales</taxon>
        <taxon>Bacillaceae</taxon>
        <taxon>Bacillus</taxon>
        <taxon>Bacillus cereus group</taxon>
    </lineage>
</organism>
<evidence type="ECO:0000305" key="1"/>
<accession>Q9ZNL9</accession>
<keyword id="KW-0749">Sporulation</keyword>
<keyword id="KW-0800">Toxin</keyword>
<keyword id="KW-0843">Virulence</keyword>
<proteinExistence type="evidence at transcript level"/>
<feature type="chain" id="PRO_0000174080" description="Pesticidal crystal protein Cry9Ea">
    <location>
        <begin position="1"/>
        <end position="1150"/>
    </location>
</feature>